<feature type="signal peptide" evidence="3">
    <location>
        <begin position="1"/>
        <end position="20"/>
    </location>
</feature>
<feature type="chain" id="PRO_0000021612" description="Leucine-rich repeat-containing protein 25">
    <location>
        <begin position="21"/>
        <end position="307"/>
    </location>
</feature>
<feature type="topological domain" description="Extracellular" evidence="3">
    <location>
        <begin position="21"/>
        <end position="168"/>
    </location>
</feature>
<feature type="transmembrane region" description="Helical" evidence="3">
    <location>
        <begin position="169"/>
        <end position="189"/>
    </location>
</feature>
<feature type="topological domain" description="Cytoplasmic" evidence="3">
    <location>
        <begin position="190"/>
        <end position="307"/>
    </location>
</feature>
<feature type="repeat" description="LRR 1">
    <location>
        <begin position="63"/>
        <end position="86"/>
    </location>
</feature>
<feature type="repeat" description="LRR 2">
    <location>
        <begin position="87"/>
        <end position="110"/>
    </location>
</feature>
<feature type="region of interest" description="Disordered" evidence="4">
    <location>
        <begin position="205"/>
        <end position="249"/>
    </location>
</feature>
<feature type="compositionally biased region" description="Low complexity" evidence="4">
    <location>
        <begin position="211"/>
        <end position="226"/>
    </location>
</feature>
<feature type="compositionally biased region" description="Polar residues" evidence="4">
    <location>
        <begin position="232"/>
        <end position="243"/>
    </location>
</feature>
<feature type="modified residue" description="Phosphotyrosine" evidence="1">
    <location>
        <position position="286"/>
    </location>
</feature>
<feature type="glycosylation site" description="N-linked (GlcNAc...) asparagine" evidence="3">
    <location>
        <position position="44"/>
    </location>
</feature>
<feature type="glycosylation site" description="N-linked (GlcNAc...) asparagine" evidence="3">
    <location>
        <position position="56"/>
    </location>
</feature>
<feature type="glycosylation site" description="N-linked (GlcNAc...) asparagine" evidence="3">
    <location>
        <position position="95"/>
    </location>
</feature>
<feature type="glycosylation site" description="N-linked (GlcNAc...) asparagine" evidence="3">
    <location>
        <position position="132"/>
    </location>
</feature>
<feature type="glycosylation site" description="N-linked (GlcNAc...) asparagine" evidence="3">
    <location>
        <position position="151"/>
    </location>
</feature>
<dbReference type="EMBL" id="AJ422150">
    <property type="protein sequence ID" value="CAD19533.1"/>
    <property type="molecule type" value="mRNA"/>
</dbReference>
<dbReference type="FunCoup" id="Q8MII8">
    <property type="interactions" value="240"/>
</dbReference>
<dbReference type="STRING" id="9913.ENSBTAP00000022955"/>
<dbReference type="GlyCosmos" id="Q8MII8">
    <property type="glycosylation" value="5 sites, No reported glycans"/>
</dbReference>
<dbReference type="GlyGen" id="Q8MII8">
    <property type="glycosylation" value="5 sites"/>
</dbReference>
<dbReference type="PaxDb" id="9913-ENSBTAP00000022955"/>
<dbReference type="eggNOG" id="ENOG502S9V5">
    <property type="taxonomic scope" value="Eukaryota"/>
</dbReference>
<dbReference type="InParanoid" id="Q8MII8"/>
<dbReference type="OrthoDB" id="9835318at2759"/>
<dbReference type="Proteomes" id="UP000009136">
    <property type="component" value="Unplaced"/>
</dbReference>
<dbReference type="GO" id="GO:0005737">
    <property type="term" value="C:cytoplasm"/>
    <property type="evidence" value="ECO:0007669"/>
    <property type="project" value="UniProtKB-SubCell"/>
</dbReference>
<dbReference type="GO" id="GO:0016020">
    <property type="term" value="C:membrane"/>
    <property type="evidence" value="ECO:0007669"/>
    <property type="project" value="UniProtKB-SubCell"/>
</dbReference>
<dbReference type="Gene3D" id="3.80.10.10">
    <property type="entry name" value="Ribonuclease Inhibitor"/>
    <property type="match status" value="1"/>
</dbReference>
<dbReference type="InterPro" id="IPR001611">
    <property type="entry name" value="Leu-rich_rpt"/>
</dbReference>
<dbReference type="InterPro" id="IPR032675">
    <property type="entry name" value="LRR_dom_sf"/>
</dbReference>
<dbReference type="InterPro" id="IPR039243">
    <property type="entry name" value="LRRC25"/>
</dbReference>
<dbReference type="PANTHER" id="PTHR20878">
    <property type="entry name" value="LEUCINE-RICH REPEAT CONTAINING PROTEIN 25"/>
    <property type="match status" value="1"/>
</dbReference>
<dbReference type="PANTHER" id="PTHR20878:SF0">
    <property type="entry name" value="LEUCINE-RICH REPEAT-CONTAINING PROTEIN 25"/>
    <property type="match status" value="1"/>
</dbReference>
<dbReference type="Pfam" id="PF13855">
    <property type="entry name" value="LRR_8"/>
    <property type="match status" value="1"/>
</dbReference>
<dbReference type="SUPFAM" id="SSF52058">
    <property type="entry name" value="L domain-like"/>
    <property type="match status" value="1"/>
</dbReference>
<sequence length="307" mass="33934">MGGPLMWALLLPLLLHQAGSQTSSCSVLSGYMDWTKEYFDTCLNFSGKILTQLPQNQSLRARSVQLLDLSANGLQRLPWSFFRDLEQLQLLIVTNNSLDFVDRALXXXGCGLELLADCSCALLDWHTDRQDNCSGPELPRCLDVPTGAWHNLSVFLDVSCPSGLTKIAIGALAASGSLLLVLAIAGPVLAWRFCRHRMDQNLSKTWASQDGSRSGSGRQPRYSSQGRRPKSPANTPPRSSTPDYENVFVGPPAARHQWDELRSPPSEGGDFYMTYDSLQHESQPVYCNLQSLSQVPLDDEEYVVPGR</sequence>
<organism>
    <name type="scientific">Bos taurus</name>
    <name type="common">Bovine</name>
    <dbReference type="NCBI Taxonomy" id="9913"/>
    <lineage>
        <taxon>Eukaryota</taxon>
        <taxon>Metazoa</taxon>
        <taxon>Chordata</taxon>
        <taxon>Craniata</taxon>
        <taxon>Vertebrata</taxon>
        <taxon>Euteleostomi</taxon>
        <taxon>Mammalia</taxon>
        <taxon>Eutheria</taxon>
        <taxon>Laurasiatheria</taxon>
        <taxon>Artiodactyla</taxon>
        <taxon>Ruminantia</taxon>
        <taxon>Pecora</taxon>
        <taxon>Bovidae</taxon>
        <taxon>Bovinae</taxon>
        <taxon>Bos</taxon>
    </lineage>
</organism>
<reference key="1">
    <citation type="journal article" date="2002" name="Blood">
        <title>Subtractive hybridization reveals the expression of immunoglobulin like transcript 7, Eph-B1, granzyme B, and 3 novel transcripts in human plasmacytoid dendritic cells.</title>
        <authorList>
            <person name="Rissoan M.-C."/>
            <person name="Duhen T."/>
            <person name="Bridon J.-M."/>
            <person name="Bendriss-Vermare N."/>
            <person name="Peronne C."/>
            <person name="de Saint-Vis B.M."/>
            <person name="Briere F."/>
            <person name="Bates E.E.M."/>
        </authorList>
    </citation>
    <scope>NUCLEOTIDE SEQUENCE [MRNA]</scope>
    <source>
        <tissue>Plasmacytoid dendritic cell</tissue>
    </source>
</reference>
<proteinExistence type="evidence at transcript level"/>
<accession>Q8MII8</accession>
<evidence type="ECO:0000250" key="1">
    <source>
        <dbReference type="UniProtKB" id="Q8K1T1"/>
    </source>
</evidence>
<evidence type="ECO:0000250" key="2">
    <source>
        <dbReference type="UniProtKB" id="Q8N386"/>
    </source>
</evidence>
<evidence type="ECO:0000255" key="3"/>
<evidence type="ECO:0000256" key="4">
    <source>
        <dbReference type="SAM" id="MobiDB-lite"/>
    </source>
</evidence>
<gene>
    <name type="primary">LRRC25</name>
    <name type="synonym">MAPA</name>
</gene>
<name>LRC25_BOVIN</name>
<keyword id="KW-0963">Cytoplasm</keyword>
<keyword id="KW-0325">Glycoprotein</keyword>
<keyword id="KW-0433">Leucine-rich repeat</keyword>
<keyword id="KW-0472">Membrane</keyword>
<keyword id="KW-0597">Phosphoprotein</keyword>
<keyword id="KW-1185">Reference proteome</keyword>
<keyword id="KW-0677">Repeat</keyword>
<keyword id="KW-0732">Signal</keyword>
<keyword id="KW-0812">Transmembrane</keyword>
<keyword id="KW-1133">Transmembrane helix</keyword>
<protein>
    <recommendedName>
        <fullName>Leucine-rich repeat-containing protein 25</fullName>
    </recommendedName>
    <alternativeName>
        <fullName>Monocyte and plasmacytoid-activated protein</fullName>
    </alternativeName>
</protein>
<comment type="function">
    <text evidence="2">Plays a role in the inhibition of RLR-mediated type I interferon signaling pathway by targeting RIGI for autophagic degradation. Interacts specifically with ISG15-associated RIGI to promote interaction between RIGI and the autophagic cargo receptor p62/SQSTM1 to mediate RIGI degradation via selective autophagy. Plays also a role in the inhibition of NF-kappa-B signaling pathway and inflammatory response by promoting the degradation of p65/RELA.</text>
</comment>
<comment type="subunit">
    <text evidence="2">Interacts with RIGI. Interacts with SQSTM1. Interacts with p65/RELA; this interaction promotes the degradation of RELA through autophagy.</text>
</comment>
<comment type="subcellular location">
    <subcellularLocation>
        <location evidence="2">Membrane</location>
        <topology evidence="2">Single-pass type I membrane protein</topology>
    </subcellularLocation>
    <subcellularLocation>
        <location evidence="2">Cytoplasm</location>
    </subcellularLocation>
</comment>